<sequence length="268" mass="30469">MDKLFKTSFRFIIRFLQILSLPVVFPYFLLSFLACLITSKNYESLPYNYPPEIRFKKVYRLVSMWLYIKGIKVVTVNDKIIPKKPVLVVANHKSNLDPLVLIKAFGRLKNSPPLTFVAKIELKDTVLFKLMKLIDCVFIDRKNIRQIANALETQQQLIRQGTAIAVFAEGTRILSNDIGEFKPGALKVAYNAFVPILPVSIVGSLGKMESNKRLKEHGVKKSSNYEVKVIFNKLINPISFNQIDSNNLANNIRSIISDAYTSEKPSND</sequence>
<evidence type="ECO:0000250" key="1"/>
<evidence type="ECO:0000305" key="2"/>
<comment type="function">
    <text>Converts lysophosphatidic acid (LPA) into phosphatidic acid by incorporating acyl moiety at the 2 position.</text>
</comment>
<comment type="catalytic activity">
    <reaction>
        <text>a 1-acyl-sn-glycero-3-phosphate + an acyl-CoA = a 1,2-diacyl-sn-glycero-3-phosphate + CoA</text>
        <dbReference type="Rhea" id="RHEA:19709"/>
        <dbReference type="ChEBI" id="CHEBI:57287"/>
        <dbReference type="ChEBI" id="CHEBI:57970"/>
        <dbReference type="ChEBI" id="CHEBI:58342"/>
        <dbReference type="ChEBI" id="CHEBI:58608"/>
        <dbReference type="EC" id="2.3.1.51"/>
    </reaction>
</comment>
<comment type="pathway">
    <text>Phospholipid metabolism; CDP-diacylglycerol biosynthesis; CDP-diacylglycerol from sn-glycerol 3-phosphate: step 2/3.</text>
</comment>
<comment type="domain">
    <text evidence="1">The HXXXXD motif is essential for acyltransferase activity and may constitute the binding site for the phosphate moiety of the glycerol-3-phosphate.</text>
</comment>
<comment type="similarity">
    <text evidence="2">Belongs to the 1-acyl-sn-glycerol-3-phosphate acyltransferase family.</text>
</comment>
<keyword id="KW-0012">Acyltransferase</keyword>
<keyword id="KW-0444">Lipid biosynthesis</keyword>
<keyword id="KW-0443">Lipid metabolism</keyword>
<keyword id="KW-0594">Phospholipid biosynthesis</keyword>
<keyword id="KW-1208">Phospholipid metabolism</keyword>
<keyword id="KW-1185">Reference proteome</keyword>
<keyword id="KW-0808">Transferase</keyword>
<proteinExistence type="inferred from homology"/>
<reference key="1">
    <citation type="journal article" date="1995" name="Science">
        <title>The minimal gene complement of Mycoplasma genitalium.</title>
        <authorList>
            <person name="Fraser C.M."/>
            <person name="Gocayne J.D."/>
            <person name="White O."/>
            <person name="Adams M.D."/>
            <person name="Clayton R.A."/>
            <person name="Fleischmann R.D."/>
            <person name="Bult C.J."/>
            <person name="Kerlavage A.R."/>
            <person name="Sutton G.G."/>
            <person name="Kelley J.M."/>
            <person name="Fritchman J.L."/>
            <person name="Weidman J.F."/>
            <person name="Small K.V."/>
            <person name="Sandusky M."/>
            <person name="Fuhrmann J.L."/>
            <person name="Nguyen D.T."/>
            <person name="Utterback T.R."/>
            <person name="Saudek D.M."/>
            <person name="Phillips C.A."/>
            <person name="Merrick J.M."/>
            <person name="Tomb J.-F."/>
            <person name="Dougherty B.A."/>
            <person name="Bott K.F."/>
            <person name="Hu P.-C."/>
            <person name="Lucier T.S."/>
            <person name="Peterson S.N."/>
            <person name="Smith H.O."/>
            <person name="Hutchison C.A. III"/>
            <person name="Venter J.C."/>
        </authorList>
    </citation>
    <scope>NUCLEOTIDE SEQUENCE [LARGE SCALE GENOMIC DNA]</scope>
    <source>
        <strain>ATCC 33530 / DSM 19775 / NCTC 10195 / G37</strain>
    </source>
</reference>
<reference key="2">
    <citation type="journal article" date="1993" name="J. Bacteriol.">
        <title>A survey of the Mycoplasma genitalium genome by using random sequencing.</title>
        <authorList>
            <person name="Peterson S.N."/>
            <person name="Hu P.-C."/>
            <person name="Bott K.F."/>
            <person name="Hutchison C.A. III"/>
        </authorList>
    </citation>
    <scope>NUCLEOTIDE SEQUENCE [GENOMIC DNA] OF 1-105</scope>
    <source>
        <strain>ATCC 33530 / DSM 19775 / NCTC 10195 / G37</strain>
    </source>
</reference>
<gene>
    <name type="primary">plsC</name>
    <name type="ordered locus">MG212</name>
</gene>
<feature type="chain" id="PRO_0000208172" description="Probable 1-acyl-sn-glycerol-3-phosphate acyltransferase">
    <location>
        <begin position="1"/>
        <end position="268"/>
    </location>
</feature>
<feature type="short sequence motif" description="HXXXXD motif">
    <location>
        <begin position="92"/>
        <end position="97"/>
    </location>
</feature>
<feature type="sequence conflict" description="In Ref. 2." evidence="2" ref="2">
    <location>
        <position position="2"/>
    </location>
</feature>
<protein>
    <recommendedName>
        <fullName>Probable 1-acyl-sn-glycerol-3-phosphate acyltransferase</fullName>
        <shortName>1-AGP acyltransferase</shortName>
        <shortName>1-AGPAT</shortName>
        <ecNumber>2.3.1.51</ecNumber>
    </recommendedName>
    <alternativeName>
        <fullName>Lysophosphatidic acid acyltransferase</fullName>
        <shortName>LPAAT</shortName>
    </alternativeName>
</protein>
<organism>
    <name type="scientific">Mycoplasma genitalium (strain ATCC 33530 / DSM 19775 / NCTC 10195 / G37)</name>
    <name type="common">Mycoplasmoides genitalium</name>
    <dbReference type="NCBI Taxonomy" id="243273"/>
    <lineage>
        <taxon>Bacteria</taxon>
        <taxon>Bacillati</taxon>
        <taxon>Mycoplasmatota</taxon>
        <taxon>Mycoplasmoidales</taxon>
        <taxon>Mycoplasmoidaceae</taxon>
        <taxon>Mycoplasmoides</taxon>
    </lineage>
</organism>
<dbReference type="EC" id="2.3.1.51"/>
<dbReference type="EMBL" id="L43967">
    <property type="protein sequence ID" value="AAC71431.1"/>
    <property type="molecule type" value="Genomic_DNA"/>
</dbReference>
<dbReference type="EMBL" id="U02160">
    <property type="protein sequence ID" value="AAD12442.1"/>
    <property type="molecule type" value="Genomic_DNA"/>
</dbReference>
<dbReference type="PIR" id="D64223">
    <property type="entry name" value="D64223"/>
</dbReference>
<dbReference type="RefSeq" id="WP_009885752.1">
    <property type="nucleotide sequence ID" value="NC_000908.2"/>
</dbReference>
<dbReference type="SMR" id="Q49402"/>
<dbReference type="STRING" id="243273.MG_212"/>
<dbReference type="GeneID" id="88282347"/>
<dbReference type="KEGG" id="mge:MG_212"/>
<dbReference type="eggNOG" id="COG0204">
    <property type="taxonomic scope" value="Bacteria"/>
</dbReference>
<dbReference type="HOGENOM" id="CLU_027938_6_1_14"/>
<dbReference type="InParanoid" id="Q49402"/>
<dbReference type="OrthoDB" id="9803035at2"/>
<dbReference type="BioCyc" id="MGEN243273:G1GJ2-248-MONOMER"/>
<dbReference type="UniPathway" id="UPA00557">
    <property type="reaction ID" value="UER00613"/>
</dbReference>
<dbReference type="Proteomes" id="UP000000807">
    <property type="component" value="Chromosome"/>
</dbReference>
<dbReference type="GO" id="GO:0016020">
    <property type="term" value="C:membrane"/>
    <property type="evidence" value="ECO:0007669"/>
    <property type="project" value="InterPro"/>
</dbReference>
<dbReference type="GO" id="GO:0003841">
    <property type="term" value="F:1-acylglycerol-3-phosphate O-acyltransferase activity"/>
    <property type="evidence" value="ECO:0000318"/>
    <property type="project" value="GO_Central"/>
</dbReference>
<dbReference type="GO" id="GO:0016024">
    <property type="term" value="P:CDP-diacylglycerol biosynthetic process"/>
    <property type="evidence" value="ECO:0007669"/>
    <property type="project" value="UniProtKB-UniPathway"/>
</dbReference>
<dbReference type="GO" id="GO:0006654">
    <property type="term" value="P:phosphatidic acid biosynthetic process"/>
    <property type="evidence" value="ECO:0000318"/>
    <property type="project" value="GO_Central"/>
</dbReference>
<dbReference type="CDD" id="cd07989">
    <property type="entry name" value="LPLAT_AGPAT-like"/>
    <property type="match status" value="1"/>
</dbReference>
<dbReference type="InterPro" id="IPR004552">
    <property type="entry name" value="AGP_acyltrans"/>
</dbReference>
<dbReference type="InterPro" id="IPR002123">
    <property type="entry name" value="Plipid/glycerol_acylTrfase"/>
</dbReference>
<dbReference type="NCBIfam" id="TIGR00530">
    <property type="entry name" value="AGP_acyltrn"/>
    <property type="match status" value="1"/>
</dbReference>
<dbReference type="PANTHER" id="PTHR10434">
    <property type="entry name" value="1-ACYL-SN-GLYCEROL-3-PHOSPHATE ACYLTRANSFERASE"/>
    <property type="match status" value="1"/>
</dbReference>
<dbReference type="PANTHER" id="PTHR10434:SF64">
    <property type="entry name" value="1-ACYL-SN-GLYCEROL-3-PHOSPHATE ACYLTRANSFERASE-RELATED"/>
    <property type="match status" value="1"/>
</dbReference>
<dbReference type="Pfam" id="PF01553">
    <property type="entry name" value="Acyltransferase"/>
    <property type="match status" value="1"/>
</dbReference>
<dbReference type="SMART" id="SM00563">
    <property type="entry name" value="PlsC"/>
    <property type="match status" value="1"/>
</dbReference>
<dbReference type="SUPFAM" id="SSF69593">
    <property type="entry name" value="Glycerol-3-phosphate (1)-acyltransferase"/>
    <property type="match status" value="1"/>
</dbReference>
<accession>Q49402</accession>
<accession>Q49287</accession>
<name>PLSC_MYCGE</name>